<protein>
    <recommendedName>
        <fullName evidence="3">Type II methyltransferase M.NlaX</fullName>
        <shortName evidence="4">M.NlaX</shortName>
        <ecNumber>2.1.1.37</ecNumber>
    </recommendedName>
    <alternativeName>
        <fullName>Cytosine-specific methyltransferase NlaX</fullName>
    </alternativeName>
</protein>
<proteinExistence type="inferred from homology"/>
<gene>
    <name type="primary">nlaXM</name>
</gene>
<dbReference type="EC" id="2.1.1.37"/>
<dbReference type="EMBL" id="X54485">
    <property type="protein sequence ID" value="CAA38357.1"/>
    <property type="molecule type" value="Genomic_DNA"/>
</dbReference>
<dbReference type="PIR" id="S12037">
    <property type="entry name" value="XYNHCL"/>
</dbReference>
<dbReference type="SMR" id="P24581"/>
<dbReference type="STRING" id="486.B2G52_01545"/>
<dbReference type="REBASE" id="2158">
    <property type="entry name" value="M.NlaX"/>
</dbReference>
<dbReference type="PRO" id="PR:P24581"/>
<dbReference type="GO" id="GO:0003886">
    <property type="term" value="F:DNA (cytosine-5-)-methyltransferase activity"/>
    <property type="evidence" value="ECO:0007669"/>
    <property type="project" value="UniProtKB-EC"/>
</dbReference>
<dbReference type="GO" id="GO:0003677">
    <property type="term" value="F:DNA binding"/>
    <property type="evidence" value="ECO:0007669"/>
    <property type="project" value="UniProtKB-KW"/>
</dbReference>
<dbReference type="GO" id="GO:0009307">
    <property type="term" value="P:DNA restriction-modification system"/>
    <property type="evidence" value="ECO:0007669"/>
    <property type="project" value="UniProtKB-KW"/>
</dbReference>
<dbReference type="GO" id="GO:0032259">
    <property type="term" value="P:methylation"/>
    <property type="evidence" value="ECO:0007669"/>
    <property type="project" value="UniProtKB-KW"/>
</dbReference>
<dbReference type="CDD" id="cd00315">
    <property type="entry name" value="Cyt_C5_DNA_methylase"/>
    <property type="match status" value="1"/>
</dbReference>
<dbReference type="Gene3D" id="3.90.120.30">
    <property type="match status" value="1"/>
</dbReference>
<dbReference type="Gene3D" id="3.40.50.150">
    <property type="entry name" value="Vaccinia Virus protein VP39"/>
    <property type="match status" value="1"/>
</dbReference>
<dbReference type="InterPro" id="IPR050750">
    <property type="entry name" value="C5-MTase"/>
</dbReference>
<dbReference type="InterPro" id="IPR018117">
    <property type="entry name" value="C5_DNA_meth_AS"/>
</dbReference>
<dbReference type="InterPro" id="IPR001525">
    <property type="entry name" value="C5_MeTfrase"/>
</dbReference>
<dbReference type="InterPro" id="IPR031303">
    <property type="entry name" value="C5_meth_CS"/>
</dbReference>
<dbReference type="InterPro" id="IPR029063">
    <property type="entry name" value="SAM-dependent_MTases_sf"/>
</dbReference>
<dbReference type="NCBIfam" id="TIGR00675">
    <property type="entry name" value="dcm"/>
    <property type="match status" value="1"/>
</dbReference>
<dbReference type="PANTHER" id="PTHR46098">
    <property type="entry name" value="TRNA (CYTOSINE(38)-C(5))-METHYLTRANSFERASE"/>
    <property type="match status" value="1"/>
</dbReference>
<dbReference type="PANTHER" id="PTHR46098:SF1">
    <property type="entry name" value="TRNA (CYTOSINE(38)-C(5))-METHYLTRANSFERASE"/>
    <property type="match status" value="1"/>
</dbReference>
<dbReference type="Pfam" id="PF00145">
    <property type="entry name" value="DNA_methylase"/>
    <property type="match status" value="1"/>
</dbReference>
<dbReference type="PRINTS" id="PR00105">
    <property type="entry name" value="C5METTRFRASE"/>
</dbReference>
<dbReference type="SUPFAM" id="SSF53335">
    <property type="entry name" value="S-adenosyl-L-methionine-dependent methyltransferases"/>
    <property type="match status" value="1"/>
</dbReference>
<dbReference type="PROSITE" id="PS00094">
    <property type="entry name" value="C5_MTASE_1"/>
    <property type="match status" value="1"/>
</dbReference>
<dbReference type="PROSITE" id="PS00095">
    <property type="entry name" value="C5_MTASE_2"/>
    <property type="match status" value="1"/>
</dbReference>
<dbReference type="PROSITE" id="PS51679">
    <property type="entry name" value="SAM_MT_C5"/>
    <property type="match status" value="1"/>
</dbReference>
<sequence length="313" mass="34843">MFKIIDLFAGIGGIRLGFEQAFDDVRCVFSSEIDKYAVQTYQANHGGETVCGDITQTDVADIPDHDILSAGFPCQPFSQAGLKKGFADTRGTLFFDIERILLAKKPQAFLLENVKQLKGHDKGRTLQVILAHLQQAGYKVYTEVLKARDFGIPQNRERIYLVGFLNHDVDFRFPQPIGQATAVGDILEAYPDEKYTISDKLWQGYQRRKAENRAAGKGFGYGLFNAESAYTNTISARYYKDGSEILIEQPGKNPRKITPPEAARLQGFPDSFQIPVSDAQAYRQFGNSVCVPVIRAIAEQMKAALSAVSDRKV</sequence>
<keyword id="KW-0238">DNA-binding</keyword>
<keyword id="KW-0489">Methyltransferase</keyword>
<keyword id="KW-0680">Restriction system</keyword>
<keyword id="KW-0949">S-adenosyl-L-methionine</keyword>
<keyword id="KW-0808">Transferase</keyword>
<organism>
    <name type="scientific">Neisseria lactamica</name>
    <dbReference type="NCBI Taxonomy" id="486"/>
    <lineage>
        <taxon>Bacteria</taxon>
        <taxon>Pseudomonadati</taxon>
        <taxon>Pseudomonadota</taxon>
        <taxon>Betaproteobacteria</taxon>
        <taxon>Neisseriales</taxon>
        <taxon>Neisseriaceae</taxon>
        <taxon>Neisseria</taxon>
    </lineage>
</organism>
<reference key="1">
    <citation type="journal article" date="1990" name="Mol. Gen. Genet.">
        <title>Cloning and characterization of two tandemly arranged DNA methyltransferase genes of Neisseria lactamica: an adenine-specific M.NlaIII and a cytosine-type methylase.</title>
        <authorList>
            <person name="Labbe D."/>
            <person name="Hoeltke H.J."/>
            <person name="Lau P.C.K."/>
        </authorList>
    </citation>
    <scope>NUCLEOTIDE SEQUENCE [GENOMIC DNA]</scope>
    <scope>POSSIBLE FUNCTION</scope>
    <source>
        <strain>ATCC 23970 / DSM 4691 / CCUG 5853 / CIP 72.17 / NCTC 10617 / NCDC A7515</strain>
    </source>
</reference>
<reference key="2">
    <citation type="journal article" date="2003" name="Nucleic Acids Res.">
        <title>A nomenclature for restriction enzymes, DNA methyltransferases, homing endonucleases and their genes.</title>
        <authorList>
            <person name="Roberts R.J."/>
            <person name="Belfort M."/>
            <person name="Bestor T."/>
            <person name="Bhagwat A.S."/>
            <person name="Bickle T.A."/>
            <person name="Bitinaite J."/>
            <person name="Blumenthal R.M."/>
            <person name="Degtyarev S.K."/>
            <person name="Dryden D.T."/>
            <person name="Dybvig K."/>
            <person name="Firman K."/>
            <person name="Gromova E.S."/>
            <person name="Gumport R.I."/>
            <person name="Halford S.E."/>
            <person name="Hattman S."/>
            <person name="Heitman J."/>
            <person name="Hornby D.P."/>
            <person name="Janulaitis A."/>
            <person name="Jeltsch A."/>
            <person name="Josephsen J."/>
            <person name="Kiss A."/>
            <person name="Klaenhammer T.R."/>
            <person name="Kobayashi I."/>
            <person name="Kong H."/>
            <person name="Krueger D.H."/>
            <person name="Lacks S."/>
            <person name="Marinus M.G."/>
            <person name="Miyahara M."/>
            <person name="Morgan R.D."/>
            <person name="Murray N.E."/>
            <person name="Nagaraja V."/>
            <person name="Piekarowicz A."/>
            <person name="Pingoud A."/>
            <person name="Raleigh E."/>
            <person name="Rao D.N."/>
            <person name="Reich N."/>
            <person name="Repin V.E."/>
            <person name="Selker E.U."/>
            <person name="Shaw P.C."/>
            <person name="Stein D.C."/>
            <person name="Stoddard B.L."/>
            <person name="Szybalski W."/>
            <person name="Trautner T.A."/>
            <person name="Van Etten J.L."/>
            <person name="Vitor J.M."/>
            <person name="Wilson G.G."/>
            <person name="Xu S.Y."/>
        </authorList>
    </citation>
    <scope>NOMENCLATURE</scope>
</reference>
<comment type="function">
    <text evidence="3 5">A methylase, recognizes the double-stranded sequence 5'-CCNGG-3' and methylates C-2 on both strands. May be the equivalent of dcm in this bacteria, or it may protect the DNA from cleavage by the putative NlaXP endonuclease.</text>
</comment>
<comment type="catalytic activity">
    <reaction evidence="2">
        <text>a 2'-deoxycytidine in DNA + S-adenosyl-L-methionine = a 5-methyl-2'-deoxycytidine in DNA + S-adenosyl-L-homocysteine + H(+)</text>
        <dbReference type="Rhea" id="RHEA:13681"/>
        <dbReference type="Rhea" id="RHEA-COMP:11369"/>
        <dbReference type="Rhea" id="RHEA-COMP:11370"/>
        <dbReference type="ChEBI" id="CHEBI:15378"/>
        <dbReference type="ChEBI" id="CHEBI:57856"/>
        <dbReference type="ChEBI" id="CHEBI:59789"/>
        <dbReference type="ChEBI" id="CHEBI:85452"/>
        <dbReference type="ChEBI" id="CHEBI:85454"/>
        <dbReference type="EC" id="2.1.1.37"/>
    </reaction>
</comment>
<comment type="similarity">
    <text evidence="1">Belongs to the class I-like SAM-binding methyltransferase superfamily. C5-methyltransferase family.</text>
</comment>
<name>MTNX_NEILA</name>
<evidence type="ECO:0000255" key="1">
    <source>
        <dbReference type="PROSITE-ProRule" id="PRU01016"/>
    </source>
</evidence>
<evidence type="ECO:0000255" key="2">
    <source>
        <dbReference type="PROSITE-ProRule" id="PRU10018"/>
    </source>
</evidence>
<evidence type="ECO:0000303" key="3">
    <source>
    </source>
</evidence>
<evidence type="ECO:0000303" key="4">
    <source>
    </source>
</evidence>
<evidence type="ECO:0000305" key="5">
    <source>
    </source>
</evidence>
<feature type="chain" id="PRO_0000087911" description="Type II methyltransferase M.NlaX">
    <location>
        <begin position="1"/>
        <end position="313"/>
    </location>
</feature>
<feature type="domain" description="SAM-dependent MTase C5-type" evidence="1">
    <location>
        <begin position="2"/>
        <end position="308"/>
    </location>
</feature>
<feature type="active site" evidence="1 2">
    <location>
        <position position="74"/>
    </location>
</feature>
<accession>P24581</accession>